<name>AT134_MOUSE</name>
<dbReference type="EC" id="7.2.2.-"/>
<dbReference type="EMBL" id="AK028776">
    <property type="protein sequence ID" value="BAC26113.1"/>
    <property type="molecule type" value="mRNA"/>
</dbReference>
<dbReference type="EMBL" id="AK029303">
    <property type="protein sequence ID" value="BAC26383.1"/>
    <property type="molecule type" value="mRNA"/>
</dbReference>
<dbReference type="EMBL" id="AC175464">
    <property type="status" value="NOT_ANNOTATED_CDS"/>
    <property type="molecule type" value="Genomic_DNA"/>
</dbReference>
<dbReference type="EMBL" id="BC048410">
    <property type="protein sequence ID" value="AAH48410.1"/>
    <property type="molecule type" value="mRNA"/>
</dbReference>
<dbReference type="EMBL" id="BK005557">
    <property type="protein sequence ID" value="DAA05588.1"/>
    <property type="molecule type" value="mRNA"/>
</dbReference>
<dbReference type="CCDS" id="CCDS49816.1">
    <molecule id="Q5XF90-1"/>
</dbReference>
<dbReference type="CCDS" id="CCDS49817.1">
    <molecule id="Q5XF90-4"/>
</dbReference>
<dbReference type="CCDS" id="CCDS59623.1">
    <molecule id="Q5XF90-2"/>
</dbReference>
<dbReference type="RefSeq" id="NP_001158085.1">
    <property type="nucleotide sequence ID" value="NM_001164613.1"/>
</dbReference>
<dbReference type="RefSeq" id="XP_017172445.1">
    <property type="nucleotide sequence ID" value="XM_017316956.1"/>
</dbReference>
<dbReference type="SMR" id="Q5XF90"/>
<dbReference type="FunCoup" id="Q5XF90">
    <property type="interactions" value="197"/>
</dbReference>
<dbReference type="STRING" id="10090.ENSMUSP00000138479"/>
<dbReference type="GlyGen" id="Q5XF90">
    <property type="glycosylation" value="2 sites, 2 N-linked glycans (2 sites)"/>
</dbReference>
<dbReference type="iPTMnet" id="Q5XF90"/>
<dbReference type="PhosphoSitePlus" id="Q5XF90"/>
<dbReference type="PaxDb" id="10090-ENSMUSP00000138479"/>
<dbReference type="ProteomicsDB" id="277051">
    <molecule id="Q5XF90-1"/>
</dbReference>
<dbReference type="ProteomicsDB" id="277052">
    <molecule id="Q5XF90-2"/>
</dbReference>
<dbReference type="ProteomicsDB" id="277053">
    <molecule id="Q5XF90-3"/>
</dbReference>
<dbReference type="ProteomicsDB" id="277054">
    <molecule id="Q5XF90-4"/>
</dbReference>
<dbReference type="DNASU" id="224079"/>
<dbReference type="GeneID" id="224079"/>
<dbReference type="KEGG" id="mmu:224079"/>
<dbReference type="UCSC" id="uc007ywd.2">
    <molecule id="Q5XF90-4"/>
    <property type="organism name" value="mouse"/>
</dbReference>
<dbReference type="AGR" id="MGI:1924456"/>
<dbReference type="CTD" id="84239"/>
<dbReference type="MGI" id="MGI:1924456">
    <property type="gene designation" value="Atp13a4"/>
</dbReference>
<dbReference type="eggNOG" id="KOG0208">
    <property type="taxonomic scope" value="Eukaryota"/>
</dbReference>
<dbReference type="InParanoid" id="Q5XF90"/>
<dbReference type="OrthoDB" id="48943at2759"/>
<dbReference type="PhylomeDB" id="Q5XF90"/>
<dbReference type="Reactome" id="R-MMU-936837">
    <property type="pathway name" value="Ion transport by P-type ATPases"/>
</dbReference>
<dbReference type="BioGRID-ORCS" id="224079">
    <property type="hits" value="1 hit in 77 CRISPR screens"/>
</dbReference>
<dbReference type="ChiTaRS" id="Atp13a4">
    <property type="organism name" value="mouse"/>
</dbReference>
<dbReference type="PRO" id="PR:Q5XF90"/>
<dbReference type="Proteomes" id="UP000000589">
    <property type="component" value="Unplaced"/>
</dbReference>
<dbReference type="RNAct" id="Q5XF90">
    <property type="molecule type" value="protein"/>
</dbReference>
<dbReference type="GO" id="GO:0031901">
    <property type="term" value="C:early endosome membrane"/>
    <property type="evidence" value="ECO:0000314"/>
    <property type="project" value="UniProtKB"/>
</dbReference>
<dbReference type="GO" id="GO:0005789">
    <property type="term" value="C:endoplasmic reticulum membrane"/>
    <property type="evidence" value="ECO:0000314"/>
    <property type="project" value="MGI"/>
</dbReference>
<dbReference type="GO" id="GO:0031902">
    <property type="term" value="C:late endosome membrane"/>
    <property type="evidence" value="ECO:0000314"/>
    <property type="project" value="UniProtKB"/>
</dbReference>
<dbReference type="GO" id="GO:0055038">
    <property type="term" value="C:recycling endosome membrane"/>
    <property type="evidence" value="ECO:0000314"/>
    <property type="project" value="UniProtKB"/>
</dbReference>
<dbReference type="GO" id="GO:0005524">
    <property type="term" value="F:ATP binding"/>
    <property type="evidence" value="ECO:0007669"/>
    <property type="project" value="UniProtKB-KW"/>
</dbReference>
<dbReference type="GO" id="GO:0016887">
    <property type="term" value="F:ATP hydrolysis activity"/>
    <property type="evidence" value="ECO:0007669"/>
    <property type="project" value="InterPro"/>
</dbReference>
<dbReference type="GO" id="GO:0046872">
    <property type="term" value="F:metal ion binding"/>
    <property type="evidence" value="ECO:0007669"/>
    <property type="project" value="UniProtKB-KW"/>
</dbReference>
<dbReference type="GO" id="GO:0005388">
    <property type="term" value="F:P-type calcium transporter activity"/>
    <property type="evidence" value="ECO:0000305"/>
    <property type="project" value="MGI"/>
</dbReference>
<dbReference type="GO" id="GO:0006874">
    <property type="term" value="P:intracellular calcium ion homeostasis"/>
    <property type="evidence" value="ECO:0000314"/>
    <property type="project" value="MGI"/>
</dbReference>
<dbReference type="CDD" id="cd07542">
    <property type="entry name" value="P-type_ATPase_cation"/>
    <property type="match status" value="1"/>
</dbReference>
<dbReference type="FunFam" id="1.20.1110.10:FF:000023">
    <property type="entry name" value="Cation-transporting ATPase"/>
    <property type="match status" value="1"/>
</dbReference>
<dbReference type="FunFam" id="3.40.1110.10:FF:000028">
    <property type="entry name" value="Cation-transporting ATPase"/>
    <property type="match status" value="1"/>
</dbReference>
<dbReference type="FunFam" id="3.40.50.1000:FF:000075">
    <property type="entry name" value="Cation-transporting ATPase"/>
    <property type="match status" value="1"/>
</dbReference>
<dbReference type="Gene3D" id="3.40.1110.10">
    <property type="entry name" value="Calcium-transporting ATPase, cytoplasmic domain N"/>
    <property type="match status" value="1"/>
</dbReference>
<dbReference type="Gene3D" id="2.70.150.10">
    <property type="entry name" value="Calcium-transporting ATPase, cytoplasmic transduction domain A"/>
    <property type="match status" value="1"/>
</dbReference>
<dbReference type="Gene3D" id="3.40.50.1000">
    <property type="entry name" value="HAD superfamily/HAD-like"/>
    <property type="match status" value="1"/>
</dbReference>
<dbReference type="InterPro" id="IPR004014">
    <property type="entry name" value="ATPase_P-typ_cation-transptr_N"/>
</dbReference>
<dbReference type="InterPro" id="IPR023299">
    <property type="entry name" value="ATPase_P-typ_cyto_dom_N"/>
</dbReference>
<dbReference type="InterPro" id="IPR018303">
    <property type="entry name" value="ATPase_P-typ_P_site"/>
</dbReference>
<dbReference type="InterPro" id="IPR023298">
    <property type="entry name" value="ATPase_P-typ_TM_dom_sf"/>
</dbReference>
<dbReference type="InterPro" id="IPR008250">
    <property type="entry name" value="ATPase_P-typ_transduc_dom_A_sf"/>
</dbReference>
<dbReference type="InterPro" id="IPR036412">
    <property type="entry name" value="HAD-like_sf"/>
</dbReference>
<dbReference type="InterPro" id="IPR023214">
    <property type="entry name" value="HAD_sf"/>
</dbReference>
<dbReference type="InterPro" id="IPR006544">
    <property type="entry name" value="P-type_TPase_V"/>
</dbReference>
<dbReference type="InterPro" id="IPR047819">
    <property type="entry name" value="P5A-ATPase_N"/>
</dbReference>
<dbReference type="InterPro" id="IPR047821">
    <property type="entry name" value="P5B-type_ATPase"/>
</dbReference>
<dbReference type="InterPro" id="IPR001757">
    <property type="entry name" value="P_typ_ATPase"/>
</dbReference>
<dbReference type="InterPro" id="IPR044492">
    <property type="entry name" value="P_typ_ATPase_HD_dom"/>
</dbReference>
<dbReference type="NCBIfam" id="TIGR01494">
    <property type="entry name" value="ATPase_P-type"/>
    <property type="match status" value="1"/>
</dbReference>
<dbReference type="NCBIfam" id="TIGR01657">
    <property type="entry name" value="P-ATPase-V"/>
    <property type="match status" value="1"/>
</dbReference>
<dbReference type="PANTHER" id="PTHR45630:SF1">
    <property type="entry name" value="CATION-TRANSPORTING ATPASE 13A4-RELATED"/>
    <property type="match status" value="1"/>
</dbReference>
<dbReference type="PANTHER" id="PTHR45630">
    <property type="entry name" value="CATION-TRANSPORTING ATPASE-RELATED"/>
    <property type="match status" value="1"/>
</dbReference>
<dbReference type="Pfam" id="PF13246">
    <property type="entry name" value="Cation_ATPase"/>
    <property type="match status" value="1"/>
</dbReference>
<dbReference type="Pfam" id="PF00690">
    <property type="entry name" value="Cation_ATPase_N"/>
    <property type="match status" value="1"/>
</dbReference>
<dbReference type="Pfam" id="PF00122">
    <property type="entry name" value="E1-E2_ATPase"/>
    <property type="match status" value="1"/>
</dbReference>
<dbReference type="Pfam" id="PF12409">
    <property type="entry name" value="P5-ATPase"/>
    <property type="match status" value="1"/>
</dbReference>
<dbReference type="PRINTS" id="PR00119">
    <property type="entry name" value="CATATPASE"/>
</dbReference>
<dbReference type="SFLD" id="SFLDS00003">
    <property type="entry name" value="Haloacid_Dehalogenase"/>
    <property type="match status" value="1"/>
</dbReference>
<dbReference type="SFLD" id="SFLDF00027">
    <property type="entry name" value="p-type_atpase"/>
    <property type="match status" value="1"/>
</dbReference>
<dbReference type="SMART" id="SM00831">
    <property type="entry name" value="Cation_ATPase_N"/>
    <property type="match status" value="1"/>
</dbReference>
<dbReference type="SUPFAM" id="SSF81653">
    <property type="entry name" value="Calcium ATPase, transduction domain A"/>
    <property type="match status" value="1"/>
</dbReference>
<dbReference type="SUPFAM" id="SSF81665">
    <property type="entry name" value="Calcium ATPase, transmembrane domain M"/>
    <property type="match status" value="1"/>
</dbReference>
<dbReference type="SUPFAM" id="SSF56784">
    <property type="entry name" value="HAD-like"/>
    <property type="match status" value="1"/>
</dbReference>
<dbReference type="SUPFAM" id="SSF81660">
    <property type="entry name" value="Metal cation-transporting ATPase, ATP-binding domain N"/>
    <property type="match status" value="1"/>
</dbReference>
<dbReference type="PROSITE" id="PS00154">
    <property type="entry name" value="ATPASE_E1_E2"/>
    <property type="match status" value="1"/>
</dbReference>
<accession>Q5XF90</accession>
<accession>Q80V28</accession>
<accession>Q8C105</accession>
<accession>Q8C184</accession>
<protein>
    <recommendedName>
        <fullName>Probable cation-transporting ATPase 13A4</fullName>
        <ecNumber>7.2.2.-</ecNumber>
    </recommendedName>
    <alternativeName>
        <fullName>P5-ATPase isoform 4</fullName>
    </alternativeName>
</protein>
<proteinExistence type="evidence at protein level"/>
<gene>
    <name type="primary">Atp13a4</name>
</gene>
<feature type="chain" id="PRO_0000318676" description="Probable cation-transporting ATPase 13A4">
    <location>
        <begin position="1"/>
        <end position="1193"/>
    </location>
</feature>
<feature type="topological domain" description="Cytoplasmic" evidence="8">
    <location>
        <begin position="1"/>
        <end position="32"/>
    </location>
</feature>
<feature type="intramembrane region" evidence="8">
    <location>
        <begin position="33"/>
        <end position="53"/>
    </location>
</feature>
<feature type="topological domain" description="Cytoplasmic" evidence="8">
    <location>
        <begin position="54"/>
        <end position="198"/>
    </location>
</feature>
<feature type="transmembrane region" description="Helical" evidence="2">
    <location>
        <begin position="199"/>
        <end position="219"/>
    </location>
</feature>
<feature type="topological domain" description="Lumenal" evidence="8">
    <location>
        <begin position="220"/>
        <end position="224"/>
    </location>
</feature>
<feature type="transmembrane region" description="Helical" evidence="2">
    <location>
        <begin position="225"/>
        <end position="245"/>
    </location>
</feature>
<feature type="topological domain" description="Cytoplasmic" evidence="8">
    <location>
        <begin position="246"/>
        <end position="401"/>
    </location>
</feature>
<feature type="transmembrane region" description="Helical" evidence="2">
    <location>
        <begin position="402"/>
        <end position="422"/>
    </location>
</feature>
<feature type="topological domain" description="Lumenal" evidence="8">
    <location>
        <begin position="423"/>
        <end position="437"/>
    </location>
</feature>
<feature type="transmembrane region" description="Helical" evidence="2">
    <location>
        <begin position="438"/>
        <end position="458"/>
    </location>
</feature>
<feature type="topological domain" description="Cytoplasmic" evidence="8">
    <location>
        <begin position="459"/>
        <end position="901"/>
    </location>
</feature>
<feature type="transmembrane region" description="Helical" evidence="2">
    <location>
        <begin position="902"/>
        <end position="922"/>
    </location>
</feature>
<feature type="topological domain" description="Lumenal" evidence="8">
    <location>
        <begin position="923"/>
        <end position="933"/>
    </location>
</feature>
<feature type="transmembrane region" description="Helical" evidence="2">
    <location>
        <begin position="934"/>
        <end position="954"/>
    </location>
</feature>
<feature type="topological domain" description="Cytoplasmic" evidence="8">
    <location>
        <begin position="955"/>
        <end position="973"/>
    </location>
</feature>
<feature type="transmembrane region" description="Helical" evidence="2">
    <location>
        <begin position="974"/>
        <end position="994"/>
    </location>
</feature>
<feature type="topological domain" description="Lumenal" evidence="8">
    <location>
        <begin position="995"/>
        <end position="1036"/>
    </location>
</feature>
<feature type="transmembrane region" description="Helical" evidence="2">
    <location>
        <begin position="1037"/>
        <end position="1057"/>
    </location>
</feature>
<feature type="topological domain" description="Cytoplasmic" evidence="8">
    <location>
        <begin position="1058"/>
        <end position="1071"/>
    </location>
</feature>
<feature type="transmembrane region" description="Helical" evidence="2">
    <location>
        <begin position="1072"/>
        <end position="1092"/>
    </location>
</feature>
<feature type="topological domain" description="Lumenal" evidence="8">
    <location>
        <begin position="1093"/>
        <end position="1105"/>
    </location>
</feature>
<feature type="transmembrane region" description="Helical" evidence="2">
    <location>
        <begin position="1106"/>
        <end position="1126"/>
    </location>
</feature>
<feature type="topological domain" description="Cytoplasmic" evidence="8">
    <location>
        <begin position="1127"/>
        <end position="1193"/>
    </location>
</feature>
<feature type="active site" description="4-aspartylphosphate intermediate" evidence="1">
    <location>
        <position position="487"/>
    </location>
</feature>
<feature type="binding site" evidence="1">
    <location>
        <position position="849"/>
    </location>
    <ligand>
        <name>Mg(2+)</name>
        <dbReference type="ChEBI" id="CHEBI:18420"/>
    </ligand>
</feature>
<feature type="binding site" evidence="1">
    <location>
        <position position="853"/>
    </location>
    <ligand>
        <name>Mg(2+)</name>
        <dbReference type="ChEBI" id="CHEBI:18420"/>
    </ligand>
</feature>
<feature type="splice variant" id="VSP_031262" description="In isoform 3." evidence="6">
    <location>
        <begin position="1"/>
        <end position="295"/>
    </location>
</feature>
<feature type="splice variant" id="VSP_031263" description="In isoform 2." evidence="5">
    <location>
        <begin position="407"/>
        <end position="425"/>
    </location>
</feature>
<feature type="splice variant" id="VSP_031264" description="In isoform 4." evidence="6">
    <original>ILINGTIFARMSPGQKSSLVEEFQKLDYFVGMCGDGANDCGALKMAHVGISLSEQEASVASPFT</original>
    <variation>LVMNNFLGSSCVFAFSWVLLYVSIVIPRIPLVQLSVKLKIFQDMAEKAVFSMAAGFNYTGHLKK</variation>
    <location>
        <begin position="815"/>
        <end position="878"/>
    </location>
</feature>
<feature type="splice variant" id="VSP_031265" description="In isoform 4." evidence="6">
    <location>
        <begin position="879"/>
        <end position="1193"/>
    </location>
</feature>
<feature type="sequence conflict" description="In Ref. 1; BAC26113/BAC26383." evidence="7" ref="1">
    <original>L</original>
    <variation>F</variation>
    <location>
        <position position="568"/>
    </location>
</feature>
<feature type="sequence conflict" description="In Ref. 1; BAC26113/BAC26383." evidence="7" ref="1">
    <original>G</original>
    <variation>A</variation>
    <location>
        <position position="587"/>
    </location>
</feature>
<feature type="sequence conflict" description="In Ref. 1; BAC26113/BAC26383." evidence="7" ref="1">
    <original>R</original>
    <variation>G</variation>
    <location>
        <position position="790"/>
    </location>
</feature>
<reference key="1">
    <citation type="journal article" date="2005" name="Science">
        <title>The transcriptional landscape of the mammalian genome.</title>
        <authorList>
            <person name="Carninci P."/>
            <person name="Kasukawa T."/>
            <person name="Katayama S."/>
            <person name="Gough J."/>
            <person name="Frith M.C."/>
            <person name="Maeda N."/>
            <person name="Oyama R."/>
            <person name="Ravasi T."/>
            <person name="Lenhard B."/>
            <person name="Wells C."/>
            <person name="Kodzius R."/>
            <person name="Shimokawa K."/>
            <person name="Bajic V.B."/>
            <person name="Brenner S.E."/>
            <person name="Batalov S."/>
            <person name="Forrest A.R."/>
            <person name="Zavolan M."/>
            <person name="Davis M.J."/>
            <person name="Wilming L.G."/>
            <person name="Aidinis V."/>
            <person name="Allen J.E."/>
            <person name="Ambesi-Impiombato A."/>
            <person name="Apweiler R."/>
            <person name="Aturaliya R.N."/>
            <person name="Bailey T.L."/>
            <person name="Bansal M."/>
            <person name="Baxter L."/>
            <person name="Beisel K.W."/>
            <person name="Bersano T."/>
            <person name="Bono H."/>
            <person name="Chalk A.M."/>
            <person name="Chiu K.P."/>
            <person name="Choudhary V."/>
            <person name="Christoffels A."/>
            <person name="Clutterbuck D.R."/>
            <person name="Crowe M.L."/>
            <person name="Dalla E."/>
            <person name="Dalrymple B.P."/>
            <person name="de Bono B."/>
            <person name="Della Gatta G."/>
            <person name="di Bernardo D."/>
            <person name="Down T."/>
            <person name="Engstrom P."/>
            <person name="Fagiolini M."/>
            <person name="Faulkner G."/>
            <person name="Fletcher C.F."/>
            <person name="Fukushima T."/>
            <person name="Furuno M."/>
            <person name="Futaki S."/>
            <person name="Gariboldi M."/>
            <person name="Georgii-Hemming P."/>
            <person name="Gingeras T.R."/>
            <person name="Gojobori T."/>
            <person name="Green R.E."/>
            <person name="Gustincich S."/>
            <person name="Harbers M."/>
            <person name="Hayashi Y."/>
            <person name="Hensch T.K."/>
            <person name="Hirokawa N."/>
            <person name="Hill D."/>
            <person name="Huminiecki L."/>
            <person name="Iacono M."/>
            <person name="Ikeo K."/>
            <person name="Iwama A."/>
            <person name="Ishikawa T."/>
            <person name="Jakt M."/>
            <person name="Kanapin A."/>
            <person name="Katoh M."/>
            <person name="Kawasawa Y."/>
            <person name="Kelso J."/>
            <person name="Kitamura H."/>
            <person name="Kitano H."/>
            <person name="Kollias G."/>
            <person name="Krishnan S.P."/>
            <person name="Kruger A."/>
            <person name="Kummerfeld S.K."/>
            <person name="Kurochkin I.V."/>
            <person name="Lareau L.F."/>
            <person name="Lazarevic D."/>
            <person name="Lipovich L."/>
            <person name="Liu J."/>
            <person name="Liuni S."/>
            <person name="McWilliam S."/>
            <person name="Madan Babu M."/>
            <person name="Madera M."/>
            <person name="Marchionni L."/>
            <person name="Matsuda H."/>
            <person name="Matsuzawa S."/>
            <person name="Miki H."/>
            <person name="Mignone F."/>
            <person name="Miyake S."/>
            <person name="Morris K."/>
            <person name="Mottagui-Tabar S."/>
            <person name="Mulder N."/>
            <person name="Nakano N."/>
            <person name="Nakauchi H."/>
            <person name="Ng P."/>
            <person name="Nilsson R."/>
            <person name="Nishiguchi S."/>
            <person name="Nishikawa S."/>
            <person name="Nori F."/>
            <person name="Ohara O."/>
            <person name="Okazaki Y."/>
            <person name="Orlando V."/>
            <person name="Pang K.C."/>
            <person name="Pavan W.J."/>
            <person name="Pavesi G."/>
            <person name="Pesole G."/>
            <person name="Petrovsky N."/>
            <person name="Piazza S."/>
            <person name="Reed J."/>
            <person name="Reid J.F."/>
            <person name="Ring B.Z."/>
            <person name="Ringwald M."/>
            <person name="Rost B."/>
            <person name="Ruan Y."/>
            <person name="Salzberg S.L."/>
            <person name="Sandelin A."/>
            <person name="Schneider C."/>
            <person name="Schoenbach C."/>
            <person name="Sekiguchi K."/>
            <person name="Semple C.A."/>
            <person name="Seno S."/>
            <person name="Sessa L."/>
            <person name="Sheng Y."/>
            <person name="Shibata Y."/>
            <person name="Shimada H."/>
            <person name="Shimada K."/>
            <person name="Silva D."/>
            <person name="Sinclair B."/>
            <person name="Sperling S."/>
            <person name="Stupka E."/>
            <person name="Sugiura K."/>
            <person name="Sultana R."/>
            <person name="Takenaka Y."/>
            <person name="Taki K."/>
            <person name="Tammoja K."/>
            <person name="Tan S.L."/>
            <person name="Tang S."/>
            <person name="Taylor M.S."/>
            <person name="Tegner J."/>
            <person name="Teichmann S.A."/>
            <person name="Ueda H.R."/>
            <person name="van Nimwegen E."/>
            <person name="Verardo R."/>
            <person name="Wei C.L."/>
            <person name="Yagi K."/>
            <person name="Yamanishi H."/>
            <person name="Zabarovsky E."/>
            <person name="Zhu S."/>
            <person name="Zimmer A."/>
            <person name="Hide W."/>
            <person name="Bult C."/>
            <person name="Grimmond S.M."/>
            <person name="Teasdale R.D."/>
            <person name="Liu E.T."/>
            <person name="Brusic V."/>
            <person name="Quackenbush J."/>
            <person name="Wahlestedt C."/>
            <person name="Mattick J.S."/>
            <person name="Hume D.A."/>
            <person name="Kai C."/>
            <person name="Sasaki D."/>
            <person name="Tomaru Y."/>
            <person name="Fukuda S."/>
            <person name="Kanamori-Katayama M."/>
            <person name="Suzuki M."/>
            <person name="Aoki J."/>
            <person name="Arakawa T."/>
            <person name="Iida J."/>
            <person name="Imamura K."/>
            <person name="Itoh M."/>
            <person name="Kato T."/>
            <person name="Kawaji H."/>
            <person name="Kawagashira N."/>
            <person name="Kawashima T."/>
            <person name="Kojima M."/>
            <person name="Kondo S."/>
            <person name="Konno H."/>
            <person name="Nakano K."/>
            <person name="Ninomiya N."/>
            <person name="Nishio T."/>
            <person name="Okada M."/>
            <person name="Plessy C."/>
            <person name="Shibata K."/>
            <person name="Shiraki T."/>
            <person name="Suzuki S."/>
            <person name="Tagami M."/>
            <person name="Waki K."/>
            <person name="Watahiki A."/>
            <person name="Okamura-Oho Y."/>
            <person name="Suzuki H."/>
            <person name="Kawai J."/>
            <person name="Hayashizaki Y."/>
        </authorList>
    </citation>
    <scope>NUCLEOTIDE SEQUENCE [LARGE SCALE MRNA] (ISOFORMS 3 AND 4)</scope>
    <source>
        <strain>C57BL/6J</strain>
        <tissue>Head</tissue>
        <tissue>Skin</tissue>
    </source>
</reference>
<reference key="2">
    <citation type="journal article" date="2009" name="PLoS Biol.">
        <title>Lineage-specific biology revealed by a finished genome assembly of the mouse.</title>
        <authorList>
            <person name="Church D.M."/>
            <person name="Goodstadt L."/>
            <person name="Hillier L.W."/>
            <person name="Zody M.C."/>
            <person name="Goldstein S."/>
            <person name="She X."/>
            <person name="Bult C.J."/>
            <person name="Agarwala R."/>
            <person name="Cherry J.L."/>
            <person name="DiCuccio M."/>
            <person name="Hlavina W."/>
            <person name="Kapustin Y."/>
            <person name="Meric P."/>
            <person name="Maglott D."/>
            <person name="Birtle Z."/>
            <person name="Marques A.C."/>
            <person name="Graves T."/>
            <person name="Zhou S."/>
            <person name="Teague B."/>
            <person name="Potamousis K."/>
            <person name="Churas C."/>
            <person name="Place M."/>
            <person name="Herschleb J."/>
            <person name="Runnheim R."/>
            <person name="Forrest D."/>
            <person name="Amos-Landgraf J."/>
            <person name="Schwartz D.C."/>
            <person name="Cheng Z."/>
            <person name="Lindblad-Toh K."/>
            <person name="Eichler E.E."/>
            <person name="Ponting C.P."/>
        </authorList>
    </citation>
    <scope>NUCLEOTIDE SEQUENCE [LARGE SCALE GENOMIC DNA]</scope>
    <source>
        <strain>C57BL/6J</strain>
    </source>
</reference>
<reference key="3">
    <citation type="journal article" date="2004" name="Genome Res.">
        <title>The status, quality, and expansion of the NIH full-length cDNA project: the Mammalian Gene Collection (MGC).</title>
        <authorList>
            <consortium name="The MGC Project Team"/>
        </authorList>
    </citation>
    <scope>NUCLEOTIDE SEQUENCE [LARGE SCALE MRNA] (ISOFORM 2)</scope>
    <source>
        <strain>FVB/N-3</strain>
        <tissue>Mammary tumor</tissue>
    </source>
</reference>
<reference key="4">
    <citation type="journal article" date="2004" name="Biochem. Biophys. Res. Commun.">
        <title>Characterization of the P5 subfamily of P-type transport ATPases in mice.</title>
        <authorList>
            <person name="Schultheis P.J."/>
            <person name="Hagen T.T."/>
            <person name="O'Toole K.K."/>
            <person name="Tachibana A."/>
            <person name="Burke C.R."/>
            <person name="McGill D.L."/>
            <person name="Okunade G.W."/>
            <person name="Shull G.E."/>
        </authorList>
    </citation>
    <scope>IDENTIFICATION</scope>
    <scope>TISSUE SPECIFICITY</scope>
</reference>
<reference key="5">
    <citation type="journal article" date="2018" name="PLoS ONE">
        <title>Parkinson disease related ATP13A2 evolved early in animal evolution.</title>
        <authorList>
            <person name="Soerensen D.M."/>
            <person name="Holemans T."/>
            <person name="van Veen S."/>
            <person name="Martin S."/>
            <person name="Arslan T."/>
            <person name="Haagendahl I.W."/>
            <person name="Holen H.W."/>
            <person name="Hamouda N.N."/>
            <person name="Eggermont J."/>
            <person name="Palmgren M."/>
            <person name="Vangheluwe P."/>
        </authorList>
    </citation>
    <scope>SUBCELLULAR LOCATION</scope>
    <scope>TOPOLOGY</scope>
</reference>
<sequence length="1193" mass="132804">MGDHLEKSQHALLNEGDENEMEIFGYRTQGCRKALCLIGSIFSLGMLPLVFYWRPAWRVWANCVPCSLQEADVVLLKTTDEFKIYSWKKVIWISLSALSSTSGLTPDHPLITDEGYIINRAIRKPDLKVRYIKVQKIRYVWNNLEGQFQKIGSLEDWLSSAKIHQKFGLGLTSEEQEIRRLICGPNAIDVEITPIWKLLIKEVLNPFYIFQLFSVCLWFSEDYKEYALAIILMSVISIALTVYDLRQQSVKLHHLVESHNSITVSVYERKAGAQDLESRLLVPGDLLILTGSRVQMPCDAILIDGSCVVDEGMLTGESIPVTKTPLSQTASSVPWKMQSEADPRRHVLFCGTEVIQAKAAGSGAVRAVVLQTGFNTAKGDLVRSILYPKPMNFKLYRDAIRFLLCLVGTATIGMVYTLCVYVLSGEPPEEVVRKALDVITIAVPPALPAALTTGIIYAQRRLKKKGIFCISPQRINVCGQLNLVCFDKTGTLTRGGLDPWGVVPCDQNGFQAVHSFASGKALPQGPLCAAMASCHSLILLDGTIQGDPLDLKMFEATKWEMTASGDDLHIKEMLAHTIVVKPTDMVGQVPAEGLAIVHQFPFSSALQRMTVIVQEMGGGRLAFMKGAPERVASFCQPDTVPTSFISELQIYTTQGFRVIALAYKKLEMDCPTTALMREKVESDLVFLGLLILENRLKEETKPVLEELISARIRTVMITGDNLQTAITVARKSGMVSEGQKVILVEANEATGSSSASISWKLVEEKKPGPFGSQDTYINIREEVPENGRDRSYHFALSGKSFHVISQYFSSLLPKILINGTIFARMSPGQKSSLVEEFQKLDYFVGMCGDGANDCGALKMAHVGISLSEQEASVASPFTSKTPNIECVPHLIKEGRAALVTSFCMFKYMALYSMIQYVGVLLLYWKTNSLSNYQFLFQDLAITTLIGVTMNLNGANPKLVPFRPAGRLISPPLLLSVVLNILLSLAMHIVGFILVQKQPWYIMDYHSVCPVRNESASALAASPSVPEKTRSNSTFASFENTTIWFLGTINCIFVALVFSKGKPFRQPTYTNYIFVLVLILQMGVCLFILFADIPEMHRRLDLLCTPVLWRVYILIMISSNFVVSLAVEKAIIENRALWIAVKRCFGYQSKSQYRIWQRNLANDSSWPPLNQTSYSDMQGVSYSNPVFESNEEQL</sequence>
<comment type="catalytic activity">
    <reaction>
        <text>ATP + H2O = ADP + phosphate + H(+)</text>
        <dbReference type="Rhea" id="RHEA:13065"/>
        <dbReference type="ChEBI" id="CHEBI:15377"/>
        <dbReference type="ChEBI" id="CHEBI:15378"/>
        <dbReference type="ChEBI" id="CHEBI:30616"/>
        <dbReference type="ChEBI" id="CHEBI:43474"/>
        <dbReference type="ChEBI" id="CHEBI:456216"/>
    </reaction>
</comment>
<comment type="subcellular location">
    <subcellularLocation>
        <location evidence="4">Early endosome membrane</location>
        <topology evidence="2">Multi-pass membrane protein</topology>
    </subcellularLocation>
    <subcellularLocation>
        <location evidence="4">Late endosome membrane</location>
        <topology evidence="2">Multi-pass membrane protein</topology>
    </subcellularLocation>
    <subcellularLocation>
        <location evidence="4">Recycling endosome membrane</location>
        <topology evidence="2">Multi-pass membrane protein</topology>
    </subcellularLocation>
</comment>
<comment type="alternative products">
    <event type="alternative splicing"/>
    <isoform>
        <id>Q5XF90-1</id>
        <name>1</name>
        <sequence type="displayed"/>
    </isoform>
    <isoform>
        <id>Q5XF90-2</id>
        <name>2</name>
        <sequence type="described" ref="VSP_031263"/>
    </isoform>
    <isoform>
        <id>Q5XF90-3</id>
        <name>3</name>
        <sequence type="described" ref="VSP_031262"/>
    </isoform>
    <isoform>
        <id>Q5XF90-4</id>
        <name>4</name>
        <sequence type="described" ref="VSP_031264 VSP_031265"/>
    </isoform>
</comment>
<comment type="tissue specificity">
    <text evidence="3">Expressed in brain and stomach.</text>
</comment>
<comment type="miscellaneous">
    <molecule>Isoform 3</molecule>
    <text evidence="7">May be produced at very low levels due to a premature stop codon in the mRNA, leading to nonsense-mediated mRNA decay.</text>
</comment>
<comment type="similarity">
    <text evidence="7">Belongs to the cation transport ATPase (P-type) (TC 3.A.3) family. Type V subfamily.</text>
</comment>
<keyword id="KW-0025">Alternative splicing</keyword>
<keyword id="KW-0067">ATP-binding</keyword>
<keyword id="KW-0967">Endosome</keyword>
<keyword id="KW-0460">Magnesium</keyword>
<keyword id="KW-0472">Membrane</keyword>
<keyword id="KW-0479">Metal-binding</keyword>
<keyword id="KW-0547">Nucleotide-binding</keyword>
<keyword id="KW-1185">Reference proteome</keyword>
<keyword id="KW-1278">Translocase</keyword>
<keyword id="KW-0812">Transmembrane</keyword>
<keyword id="KW-1133">Transmembrane helix</keyword>
<organism>
    <name type="scientific">Mus musculus</name>
    <name type="common">Mouse</name>
    <dbReference type="NCBI Taxonomy" id="10090"/>
    <lineage>
        <taxon>Eukaryota</taxon>
        <taxon>Metazoa</taxon>
        <taxon>Chordata</taxon>
        <taxon>Craniata</taxon>
        <taxon>Vertebrata</taxon>
        <taxon>Euteleostomi</taxon>
        <taxon>Mammalia</taxon>
        <taxon>Eutheria</taxon>
        <taxon>Euarchontoglires</taxon>
        <taxon>Glires</taxon>
        <taxon>Rodentia</taxon>
        <taxon>Myomorpha</taxon>
        <taxon>Muroidea</taxon>
        <taxon>Muridae</taxon>
        <taxon>Murinae</taxon>
        <taxon>Mus</taxon>
        <taxon>Mus</taxon>
    </lineage>
</organism>
<evidence type="ECO:0000250" key="1"/>
<evidence type="ECO:0000255" key="2"/>
<evidence type="ECO:0000269" key="3">
    <source>
    </source>
</evidence>
<evidence type="ECO:0000269" key="4">
    <source>
    </source>
</evidence>
<evidence type="ECO:0000303" key="5">
    <source>
    </source>
</evidence>
<evidence type="ECO:0000303" key="6">
    <source>
    </source>
</evidence>
<evidence type="ECO:0000305" key="7"/>
<evidence type="ECO:0000305" key="8">
    <source>
    </source>
</evidence>